<comment type="similarity">
    <text evidence="1">Belongs to the UPF0180 family.</text>
</comment>
<evidence type="ECO:0000255" key="1">
    <source>
        <dbReference type="HAMAP-Rule" id="MF_00506"/>
    </source>
</evidence>
<dbReference type="EMBL" id="CP001407">
    <property type="protein sequence ID" value="ACO28268.1"/>
    <property type="molecule type" value="Genomic_DNA"/>
</dbReference>
<dbReference type="RefSeq" id="WP_000101005.1">
    <property type="nucleotide sequence ID" value="NZ_CP009318.1"/>
</dbReference>
<dbReference type="KEGG" id="bcx:BCA_1448"/>
<dbReference type="PATRIC" id="fig|572264.18.peg.1398"/>
<dbReference type="Proteomes" id="UP000002210">
    <property type="component" value="Chromosome"/>
</dbReference>
<dbReference type="HAMAP" id="MF_00506">
    <property type="entry name" value="UPF0180"/>
    <property type="match status" value="1"/>
</dbReference>
<dbReference type="InterPro" id="IPR005370">
    <property type="entry name" value="UPF0180"/>
</dbReference>
<dbReference type="NCBIfam" id="NF002845">
    <property type="entry name" value="PRK03094.1"/>
    <property type="match status" value="1"/>
</dbReference>
<dbReference type="Pfam" id="PF03698">
    <property type="entry name" value="UPF0180"/>
    <property type="match status" value="1"/>
</dbReference>
<reference key="1">
    <citation type="submission" date="2009-02" db="EMBL/GenBank/DDBJ databases">
        <title>Genome sequence of Bacillus cereus 03BB102.</title>
        <authorList>
            <person name="Dodson R.J."/>
            <person name="Jackson P."/>
            <person name="Munk A.C."/>
            <person name="Brettin T."/>
            <person name="Bruce D."/>
            <person name="Detter C."/>
            <person name="Tapia R."/>
            <person name="Han C."/>
            <person name="Sutton G."/>
            <person name="Sims D."/>
        </authorList>
    </citation>
    <scope>NUCLEOTIDE SEQUENCE [LARGE SCALE GENOMIC DNA]</scope>
    <source>
        <strain>03BB102</strain>
    </source>
</reference>
<proteinExistence type="inferred from homology"/>
<name>Y1448_BACC3</name>
<protein>
    <recommendedName>
        <fullName evidence="1">UPF0180 protein BCA_1448</fullName>
    </recommendedName>
</protein>
<accession>C1EMA2</accession>
<feature type="chain" id="PRO_1000197842" description="UPF0180 protein BCA_1448">
    <location>
        <begin position="1"/>
        <end position="79"/>
    </location>
</feature>
<gene>
    <name type="ordered locus">BCA_1448</name>
</gene>
<sequence>MARIGVENSLTDVQQALKQQGHEVVTLNSEQDAQGCDCCVVTGQDSNMMGIADASIKGSVITAHGLTTDDICQQVESRT</sequence>
<organism>
    <name type="scientific">Bacillus cereus (strain 03BB102)</name>
    <dbReference type="NCBI Taxonomy" id="572264"/>
    <lineage>
        <taxon>Bacteria</taxon>
        <taxon>Bacillati</taxon>
        <taxon>Bacillota</taxon>
        <taxon>Bacilli</taxon>
        <taxon>Bacillales</taxon>
        <taxon>Bacillaceae</taxon>
        <taxon>Bacillus</taxon>
        <taxon>Bacillus cereus group</taxon>
    </lineage>
</organism>